<dbReference type="EC" id="2.7.11.32" evidence="1"/>
<dbReference type="EC" id="2.7.4.27" evidence="1"/>
<dbReference type="EMBL" id="CP000253">
    <property type="protein sequence ID" value="ABD30739.1"/>
    <property type="molecule type" value="Genomic_DNA"/>
</dbReference>
<dbReference type="RefSeq" id="WP_000411299.1">
    <property type="nucleotide sequence ID" value="NZ_LS483365.1"/>
</dbReference>
<dbReference type="RefSeq" id="YP_500175.1">
    <property type="nucleotide sequence ID" value="NC_007795.1"/>
</dbReference>
<dbReference type="SMR" id="Q2FY10"/>
<dbReference type="STRING" id="93061.SAOUHSC_01664"/>
<dbReference type="PaxDb" id="1280-SAXN108_1585"/>
<dbReference type="GeneID" id="3920076"/>
<dbReference type="KEGG" id="sao:SAOUHSC_01664"/>
<dbReference type="PATRIC" id="fig|93061.5.peg.1514"/>
<dbReference type="eggNOG" id="COG1806">
    <property type="taxonomic scope" value="Bacteria"/>
</dbReference>
<dbReference type="HOGENOM" id="CLU_046206_2_1_9"/>
<dbReference type="OrthoDB" id="9782201at2"/>
<dbReference type="PRO" id="PR:Q2FY10"/>
<dbReference type="Proteomes" id="UP000008816">
    <property type="component" value="Chromosome"/>
</dbReference>
<dbReference type="GO" id="GO:0043531">
    <property type="term" value="F:ADP binding"/>
    <property type="evidence" value="ECO:0007669"/>
    <property type="project" value="UniProtKB-UniRule"/>
</dbReference>
<dbReference type="GO" id="GO:0005524">
    <property type="term" value="F:ATP binding"/>
    <property type="evidence" value="ECO:0007669"/>
    <property type="project" value="InterPro"/>
</dbReference>
<dbReference type="GO" id="GO:0016776">
    <property type="term" value="F:phosphotransferase activity, phosphate group as acceptor"/>
    <property type="evidence" value="ECO:0007669"/>
    <property type="project" value="UniProtKB-UniRule"/>
</dbReference>
<dbReference type="GO" id="GO:0004674">
    <property type="term" value="F:protein serine/threonine kinase activity"/>
    <property type="evidence" value="ECO:0007669"/>
    <property type="project" value="UniProtKB-UniRule"/>
</dbReference>
<dbReference type="HAMAP" id="MF_00921">
    <property type="entry name" value="PDRP"/>
    <property type="match status" value="1"/>
</dbReference>
<dbReference type="InterPro" id="IPR005177">
    <property type="entry name" value="Kinase-pyrophosphorylase"/>
</dbReference>
<dbReference type="InterPro" id="IPR026565">
    <property type="entry name" value="PPDK_reg"/>
</dbReference>
<dbReference type="NCBIfam" id="NF003742">
    <property type="entry name" value="PRK05339.1"/>
    <property type="match status" value="1"/>
</dbReference>
<dbReference type="PANTHER" id="PTHR31756">
    <property type="entry name" value="PYRUVATE, PHOSPHATE DIKINASE REGULATORY PROTEIN 1, CHLOROPLASTIC"/>
    <property type="match status" value="1"/>
</dbReference>
<dbReference type="PANTHER" id="PTHR31756:SF3">
    <property type="entry name" value="PYRUVATE, PHOSPHATE DIKINASE REGULATORY PROTEIN 1, CHLOROPLASTIC"/>
    <property type="match status" value="1"/>
</dbReference>
<dbReference type="Pfam" id="PF03618">
    <property type="entry name" value="Kinase-PPPase"/>
    <property type="match status" value="1"/>
</dbReference>
<sequence>MEKIKIIVASDSIGETAELVARAGISQFNPKQCKNELLRYPYIESFEDVDEVIQVAKDTNAIIVYTLIKPEMKQYMSEKVAEFQLKSVDIMGPLMDLLSASVEEKPYNEPGIVHRLDDAYFKKIDAIEFAVKYDDGKDPKGLPKADIVLLGISRTSKTPLSQYLAHKSYKVMNVPIVPEVTPPDGLYDINPKKCIALKISEEKLNRIRKERLKQLGLGDTARYATEARIQEELNYFEEIVSEIGCPVIDVSQKAIEETANDIIHYIEQNKSK</sequence>
<keyword id="KW-0418">Kinase</keyword>
<keyword id="KW-0547">Nucleotide-binding</keyword>
<keyword id="KW-1185">Reference proteome</keyword>
<keyword id="KW-0723">Serine/threonine-protein kinase</keyword>
<keyword id="KW-0808">Transferase</keyword>
<protein>
    <recommendedName>
        <fullName evidence="1">Putative pyruvate, phosphate dikinase regulatory protein</fullName>
        <shortName evidence="1">PPDK regulatory protein</shortName>
        <ecNumber evidence="1">2.7.11.32</ecNumber>
        <ecNumber evidence="1">2.7.4.27</ecNumber>
    </recommendedName>
</protein>
<feature type="chain" id="PRO_0000316748" description="Putative pyruvate, phosphate dikinase regulatory protein">
    <location>
        <begin position="1"/>
        <end position="272"/>
    </location>
</feature>
<feature type="binding site" evidence="1">
    <location>
        <begin position="151"/>
        <end position="158"/>
    </location>
    <ligand>
        <name>ADP</name>
        <dbReference type="ChEBI" id="CHEBI:456216"/>
    </ligand>
</feature>
<accession>Q2FY10</accession>
<comment type="function">
    <text evidence="1">Bifunctional serine/threonine kinase and phosphorylase involved in the regulation of the pyruvate, phosphate dikinase (PPDK) by catalyzing its phosphorylation/dephosphorylation.</text>
</comment>
<comment type="catalytic activity">
    <reaction evidence="1">
        <text>N(tele)-phospho-L-histidyl/L-threonyl-[pyruvate, phosphate dikinase] + ADP = N(tele)-phospho-L-histidyl/O-phospho-L-threonyl-[pyruvate, phosphate dikinase] + AMP + H(+)</text>
        <dbReference type="Rhea" id="RHEA:43692"/>
        <dbReference type="Rhea" id="RHEA-COMP:10650"/>
        <dbReference type="Rhea" id="RHEA-COMP:10651"/>
        <dbReference type="ChEBI" id="CHEBI:15378"/>
        <dbReference type="ChEBI" id="CHEBI:30013"/>
        <dbReference type="ChEBI" id="CHEBI:61977"/>
        <dbReference type="ChEBI" id="CHEBI:83586"/>
        <dbReference type="ChEBI" id="CHEBI:456215"/>
        <dbReference type="ChEBI" id="CHEBI:456216"/>
        <dbReference type="EC" id="2.7.11.32"/>
    </reaction>
</comment>
<comment type="catalytic activity">
    <reaction evidence="1">
        <text>N(tele)-phospho-L-histidyl/O-phospho-L-threonyl-[pyruvate, phosphate dikinase] + phosphate + H(+) = N(tele)-phospho-L-histidyl/L-threonyl-[pyruvate, phosphate dikinase] + diphosphate</text>
        <dbReference type="Rhea" id="RHEA:43696"/>
        <dbReference type="Rhea" id="RHEA-COMP:10650"/>
        <dbReference type="Rhea" id="RHEA-COMP:10651"/>
        <dbReference type="ChEBI" id="CHEBI:15378"/>
        <dbReference type="ChEBI" id="CHEBI:30013"/>
        <dbReference type="ChEBI" id="CHEBI:33019"/>
        <dbReference type="ChEBI" id="CHEBI:43474"/>
        <dbReference type="ChEBI" id="CHEBI:61977"/>
        <dbReference type="ChEBI" id="CHEBI:83586"/>
        <dbReference type="EC" id="2.7.4.27"/>
    </reaction>
</comment>
<comment type="similarity">
    <text evidence="1">Belongs to the pyruvate, phosphate/water dikinase regulatory protein family. PDRP subfamily.</text>
</comment>
<reference key="1">
    <citation type="book" date="2006" name="Gram positive pathogens, 2nd edition">
        <title>The Staphylococcus aureus NCTC 8325 genome.</title>
        <editorList>
            <person name="Fischetti V."/>
            <person name="Novick R."/>
            <person name="Ferretti J."/>
            <person name="Portnoy D."/>
            <person name="Rood J."/>
        </editorList>
        <authorList>
            <person name="Gillaspy A.F."/>
            <person name="Worrell V."/>
            <person name="Orvis J."/>
            <person name="Roe B.A."/>
            <person name="Dyer D.W."/>
            <person name="Iandolo J.J."/>
        </authorList>
    </citation>
    <scope>NUCLEOTIDE SEQUENCE [LARGE SCALE GENOMIC DNA]</scope>
    <source>
        <strain>NCTC 8325 / PS 47</strain>
    </source>
</reference>
<evidence type="ECO:0000255" key="1">
    <source>
        <dbReference type="HAMAP-Rule" id="MF_00921"/>
    </source>
</evidence>
<gene>
    <name type="ordered locus">SAOUHSC_01664</name>
</gene>
<organism>
    <name type="scientific">Staphylococcus aureus (strain NCTC 8325 / PS 47)</name>
    <dbReference type="NCBI Taxonomy" id="93061"/>
    <lineage>
        <taxon>Bacteria</taxon>
        <taxon>Bacillati</taxon>
        <taxon>Bacillota</taxon>
        <taxon>Bacilli</taxon>
        <taxon>Bacillales</taxon>
        <taxon>Staphylococcaceae</taxon>
        <taxon>Staphylococcus</taxon>
    </lineage>
</organism>
<proteinExistence type="inferred from homology"/>
<name>PDRP_STAA8</name>